<keyword id="KW-0025">Alternative splicing</keyword>
<keyword id="KW-0238">DNA-binding</keyword>
<keyword id="KW-1017">Isopeptide bond</keyword>
<keyword id="KW-0479">Metal-binding</keyword>
<keyword id="KW-0539">Nucleus</keyword>
<keyword id="KW-1267">Proteomics identification</keyword>
<keyword id="KW-1185">Reference proteome</keyword>
<keyword id="KW-0677">Repeat</keyword>
<keyword id="KW-0694">RNA-binding</keyword>
<keyword id="KW-0804">Transcription</keyword>
<keyword id="KW-0805">Transcription regulation</keyword>
<keyword id="KW-0832">Ubl conjugation</keyword>
<keyword id="KW-0862">Zinc</keyword>
<keyword id="KW-0863">Zinc-finger</keyword>
<reference key="1">
    <citation type="journal article" date="1996" name="J. Biol. Chem.">
        <title>The KRAB zinc finger gene ZNF74 encodes an RNA-binding protein tightly associated with the nuclear matrix.</title>
        <authorList>
            <person name="Grondin B."/>
            <person name="Bazinet M."/>
            <person name="Aubry M."/>
        </authorList>
    </citation>
    <scope>NUCLEOTIDE SEQUENCE [MRNA] (ISOFORM 1)</scope>
    <source>
        <tissue>Brain</tissue>
    </source>
</reference>
<reference key="2">
    <citation type="journal article" date="1993" name="Hum. Mol. Genet.">
        <title>Isolation of a zinc finger gene consistently deleted in DiGeorge syndrome.</title>
        <authorList>
            <person name="Aubry M."/>
            <person name="Demczuk S."/>
            <person name="Desmaze C."/>
            <person name="Aikem M."/>
            <person name="Aurias M."/>
            <person name="Julien J.-P."/>
            <person name="Rouleau G.A."/>
        </authorList>
    </citation>
    <scope>NUCLEOTIDE SEQUENCE [MRNA] (ISOFORM 1)</scope>
    <source>
        <tissue>Brain</tissue>
    </source>
</reference>
<reference key="3">
    <citation type="journal article" date="2004" name="Genome Biol.">
        <title>A genome annotation-driven approach to cloning the human ORFeome.</title>
        <authorList>
            <person name="Collins J.E."/>
            <person name="Wright C.L."/>
            <person name="Edwards C.A."/>
            <person name="Davis M.P."/>
            <person name="Grinham J.A."/>
            <person name="Cole C.G."/>
            <person name="Goward M.E."/>
            <person name="Aguado B."/>
            <person name="Mallya M."/>
            <person name="Mokrab Y."/>
            <person name="Huckle E.J."/>
            <person name="Beare D.M."/>
            <person name="Dunham I."/>
        </authorList>
    </citation>
    <scope>NUCLEOTIDE SEQUENCE [LARGE SCALE MRNA] (ISOFORM 2)</scope>
</reference>
<reference key="4">
    <citation type="submission" date="1998-06" db="EMBL/GenBank/DDBJ databases">
        <title>Alternative promoter usage and splicing of ZNF74 gene.</title>
        <authorList>
            <person name="Aubry M."/>
            <person name="Cote F."/>
        </authorList>
    </citation>
    <scope>NUCLEOTIDE SEQUENCE [GENOMIC DNA]</scope>
    <scope>ALTERNATIVE SPLICING</scope>
</reference>
<reference key="5">
    <citation type="journal article" date="2004" name="Nat. Genet.">
        <title>Complete sequencing and characterization of 21,243 full-length human cDNAs.</title>
        <authorList>
            <person name="Ota T."/>
            <person name="Suzuki Y."/>
            <person name="Nishikawa T."/>
            <person name="Otsuki T."/>
            <person name="Sugiyama T."/>
            <person name="Irie R."/>
            <person name="Wakamatsu A."/>
            <person name="Hayashi K."/>
            <person name="Sato H."/>
            <person name="Nagai K."/>
            <person name="Kimura K."/>
            <person name="Makita H."/>
            <person name="Sekine M."/>
            <person name="Obayashi M."/>
            <person name="Nishi T."/>
            <person name="Shibahara T."/>
            <person name="Tanaka T."/>
            <person name="Ishii S."/>
            <person name="Yamamoto J."/>
            <person name="Saito K."/>
            <person name="Kawai Y."/>
            <person name="Isono Y."/>
            <person name="Nakamura Y."/>
            <person name="Nagahari K."/>
            <person name="Murakami K."/>
            <person name="Yasuda T."/>
            <person name="Iwayanagi T."/>
            <person name="Wagatsuma M."/>
            <person name="Shiratori A."/>
            <person name="Sudo H."/>
            <person name="Hosoiri T."/>
            <person name="Kaku Y."/>
            <person name="Kodaira H."/>
            <person name="Kondo H."/>
            <person name="Sugawara M."/>
            <person name="Takahashi M."/>
            <person name="Kanda K."/>
            <person name="Yokoi T."/>
            <person name="Furuya T."/>
            <person name="Kikkawa E."/>
            <person name="Omura Y."/>
            <person name="Abe K."/>
            <person name="Kamihara K."/>
            <person name="Katsuta N."/>
            <person name="Sato K."/>
            <person name="Tanikawa M."/>
            <person name="Yamazaki M."/>
            <person name="Ninomiya K."/>
            <person name="Ishibashi T."/>
            <person name="Yamashita H."/>
            <person name="Murakawa K."/>
            <person name="Fujimori K."/>
            <person name="Tanai H."/>
            <person name="Kimata M."/>
            <person name="Watanabe M."/>
            <person name="Hiraoka S."/>
            <person name="Chiba Y."/>
            <person name="Ishida S."/>
            <person name="Ono Y."/>
            <person name="Takiguchi S."/>
            <person name="Watanabe S."/>
            <person name="Yosida M."/>
            <person name="Hotuta T."/>
            <person name="Kusano J."/>
            <person name="Kanehori K."/>
            <person name="Takahashi-Fujii A."/>
            <person name="Hara H."/>
            <person name="Tanase T.-O."/>
            <person name="Nomura Y."/>
            <person name="Togiya S."/>
            <person name="Komai F."/>
            <person name="Hara R."/>
            <person name="Takeuchi K."/>
            <person name="Arita M."/>
            <person name="Imose N."/>
            <person name="Musashino K."/>
            <person name="Yuuki H."/>
            <person name="Oshima A."/>
            <person name="Sasaki N."/>
            <person name="Aotsuka S."/>
            <person name="Yoshikawa Y."/>
            <person name="Matsunawa H."/>
            <person name="Ichihara T."/>
            <person name="Shiohata N."/>
            <person name="Sano S."/>
            <person name="Moriya S."/>
            <person name="Momiyama H."/>
            <person name="Satoh N."/>
            <person name="Takami S."/>
            <person name="Terashima Y."/>
            <person name="Suzuki O."/>
            <person name="Nakagawa S."/>
            <person name="Senoh A."/>
            <person name="Mizoguchi H."/>
            <person name="Goto Y."/>
            <person name="Shimizu F."/>
            <person name="Wakebe H."/>
            <person name="Hishigaki H."/>
            <person name="Watanabe T."/>
            <person name="Sugiyama A."/>
            <person name="Takemoto M."/>
            <person name="Kawakami B."/>
            <person name="Yamazaki M."/>
            <person name="Watanabe K."/>
            <person name="Kumagai A."/>
            <person name="Itakura S."/>
            <person name="Fukuzumi Y."/>
            <person name="Fujimori Y."/>
            <person name="Komiyama M."/>
            <person name="Tashiro H."/>
            <person name="Tanigami A."/>
            <person name="Fujiwara T."/>
            <person name="Ono T."/>
            <person name="Yamada K."/>
            <person name="Fujii Y."/>
            <person name="Ozaki K."/>
            <person name="Hirao M."/>
            <person name="Ohmori Y."/>
            <person name="Kawabata A."/>
            <person name="Hikiji T."/>
            <person name="Kobatake N."/>
            <person name="Inagaki H."/>
            <person name="Ikema Y."/>
            <person name="Okamoto S."/>
            <person name="Okitani R."/>
            <person name="Kawakami T."/>
            <person name="Noguchi S."/>
            <person name="Itoh T."/>
            <person name="Shigeta K."/>
            <person name="Senba T."/>
            <person name="Matsumura K."/>
            <person name="Nakajima Y."/>
            <person name="Mizuno T."/>
            <person name="Morinaga M."/>
            <person name="Sasaki M."/>
            <person name="Togashi T."/>
            <person name="Oyama M."/>
            <person name="Hata H."/>
            <person name="Watanabe M."/>
            <person name="Komatsu T."/>
            <person name="Mizushima-Sugano J."/>
            <person name="Satoh T."/>
            <person name="Shirai Y."/>
            <person name="Takahashi Y."/>
            <person name="Nakagawa K."/>
            <person name="Okumura K."/>
            <person name="Nagase T."/>
            <person name="Nomura N."/>
            <person name="Kikuchi H."/>
            <person name="Masuho Y."/>
            <person name="Yamashita R."/>
            <person name="Nakai K."/>
            <person name="Yada T."/>
            <person name="Nakamura Y."/>
            <person name="Ohara O."/>
            <person name="Isogai T."/>
            <person name="Sugano S."/>
        </authorList>
    </citation>
    <scope>NUCLEOTIDE SEQUENCE [LARGE SCALE MRNA] (ISOFORM 1)</scope>
    <scope>VARIANT LYS-117</scope>
    <source>
        <tissue>Brain</tissue>
    </source>
</reference>
<reference key="6">
    <citation type="journal article" date="1999" name="Nature">
        <title>The DNA sequence of human chromosome 22.</title>
        <authorList>
            <person name="Dunham I."/>
            <person name="Hunt A.R."/>
            <person name="Collins J.E."/>
            <person name="Bruskiewich R."/>
            <person name="Beare D.M."/>
            <person name="Clamp M."/>
            <person name="Smink L.J."/>
            <person name="Ainscough R."/>
            <person name="Almeida J.P."/>
            <person name="Babbage A.K."/>
            <person name="Bagguley C."/>
            <person name="Bailey J."/>
            <person name="Barlow K.F."/>
            <person name="Bates K.N."/>
            <person name="Beasley O.P."/>
            <person name="Bird C.P."/>
            <person name="Blakey S.E."/>
            <person name="Bridgeman A.M."/>
            <person name="Buck D."/>
            <person name="Burgess J."/>
            <person name="Burrill W.D."/>
            <person name="Burton J."/>
            <person name="Carder C."/>
            <person name="Carter N.P."/>
            <person name="Chen Y."/>
            <person name="Clark G."/>
            <person name="Clegg S.M."/>
            <person name="Cobley V.E."/>
            <person name="Cole C.G."/>
            <person name="Collier R.E."/>
            <person name="Connor R."/>
            <person name="Conroy D."/>
            <person name="Corby N.R."/>
            <person name="Coville G.J."/>
            <person name="Cox A.V."/>
            <person name="Davis J."/>
            <person name="Dawson E."/>
            <person name="Dhami P.D."/>
            <person name="Dockree C."/>
            <person name="Dodsworth S.J."/>
            <person name="Durbin R.M."/>
            <person name="Ellington A.G."/>
            <person name="Evans K.L."/>
            <person name="Fey J.M."/>
            <person name="Fleming K."/>
            <person name="French L."/>
            <person name="Garner A.A."/>
            <person name="Gilbert J.G.R."/>
            <person name="Goward M.E."/>
            <person name="Grafham D.V."/>
            <person name="Griffiths M.N.D."/>
            <person name="Hall C."/>
            <person name="Hall R.E."/>
            <person name="Hall-Tamlyn G."/>
            <person name="Heathcott R.W."/>
            <person name="Ho S."/>
            <person name="Holmes S."/>
            <person name="Hunt S.E."/>
            <person name="Jones M.C."/>
            <person name="Kershaw J."/>
            <person name="Kimberley A.M."/>
            <person name="King A."/>
            <person name="Laird G.K."/>
            <person name="Langford C.F."/>
            <person name="Leversha M.A."/>
            <person name="Lloyd C."/>
            <person name="Lloyd D.M."/>
            <person name="Martyn I.D."/>
            <person name="Mashreghi-Mohammadi M."/>
            <person name="Matthews L.H."/>
            <person name="Mccann O.T."/>
            <person name="Mcclay J."/>
            <person name="Mclaren S."/>
            <person name="McMurray A.A."/>
            <person name="Milne S.A."/>
            <person name="Mortimore B.J."/>
            <person name="Odell C.N."/>
            <person name="Pavitt R."/>
            <person name="Pearce A.V."/>
            <person name="Pearson D."/>
            <person name="Phillimore B.J.C.T."/>
            <person name="Phillips S.H."/>
            <person name="Plumb R.W."/>
            <person name="Ramsay H."/>
            <person name="Ramsey Y."/>
            <person name="Rogers L."/>
            <person name="Ross M.T."/>
            <person name="Scott C.E."/>
            <person name="Sehra H.K."/>
            <person name="Skuce C.D."/>
            <person name="Smalley S."/>
            <person name="Smith M.L."/>
            <person name="Soderlund C."/>
            <person name="Spragon L."/>
            <person name="Steward C.A."/>
            <person name="Sulston J.E."/>
            <person name="Swann R.M."/>
            <person name="Vaudin M."/>
            <person name="Wall M."/>
            <person name="Wallis J.M."/>
            <person name="Whiteley M.N."/>
            <person name="Willey D.L."/>
            <person name="Williams L."/>
            <person name="Williams S.A."/>
            <person name="Williamson H."/>
            <person name="Wilmer T.E."/>
            <person name="Wilming L."/>
            <person name="Wright C.L."/>
            <person name="Hubbard T."/>
            <person name="Bentley D.R."/>
            <person name="Beck S."/>
            <person name="Rogers J."/>
            <person name="Shimizu N."/>
            <person name="Minoshima S."/>
            <person name="Kawasaki K."/>
            <person name="Sasaki T."/>
            <person name="Asakawa S."/>
            <person name="Kudoh J."/>
            <person name="Shintani A."/>
            <person name="Shibuya K."/>
            <person name="Yoshizaki Y."/>
            <person name="Aoki N."/>
            <person name="Mitsuyama S."/>
            <person name="Roe B.A."/>
            <person name="Chen F."/>
            <person name="Chu L."/>
            <person name="Crabtree J."/>
            <person name="Deschamps S."/>
            <person name="Do A."/>
            <person name="Do T."/>
            <person name="Dorman A."/>
            <person name="Fang F."/>
            <person name="Fu Y."/>
            <person name="Hu P."/>
            <person name="Hua A."/>
            <person name="Kenton S."/>
            <person name="Lai H."/>
            <person name="Lao H.I."/>
            <person name="Lewis J."/>
            <person name="Lewis S."/>
            <person name="Lin S.-P."/>
            <person name="Loh P."/>
            <person name="Malaj E."/>
            <person name="Nguyen T."/>
            <person name="Pan H."/>
            <person name="Phan S."/>
            <person name="Qi S."/>
            <person name="Qian Y."/>
            <person name="Ray L."/>
            <person name="Ren Q."/>
            <person name="Shaull S."/>
            <person name="Sloan D."/>
            <person name="Song L."/>
            <person name="Wang Q."/>
            <person name="Wang Y."/>
            <person name="Wang Z."/>
            <person name="White J."/>
            <person name="Willingham D."/>
            <person name="Wu H."/>
            <person name="Yao Z."/>
            <person name="Zhan M."/>
            <person name="Zhang G."/>
            <person name="Chissoe S."/>
            <person name="Murray J."/>
            <person name="Miller N."/>
            <person name="Minx P."/>
            <person name="Fulton R."/>
            <person name="Johnson D."/>
            <person name="Bemis G."/>
            <person name="Bentley D."/>
            <person name="Bradshaw H."/>
            <person name="Bourne S."/>
            <person name="Cordes M."/>
            <person name="Du Z."/>
            <person name="Fulton L."/>
            <person name="Goela D."/>
            <person name="Graves T."/>
            <person name="Hawkins J."/>
            <person name="Hinds K."/>
            <person name="Kemp K."/>
            <person name="Latreille P."/>
            <person name="Layman D."/>
            <person name="Ozersky P."/>
            <person name="Rohlfing T."/>
            <person name="Scheet P."/>
            <person name="Walker C."/>
            <person name="Wamsley A."/>
            <person name="Wohldmann P."/>
            <person name="Pepin K."/>
            <person name="Nelson J."/>
            <person name="Korf I."/>
            <person name="Bedell J.A."/>
            <person name="Hillier L.W."/>
            <person name="Mardis E."/>
            <person name="Waterston R."/>
            <person name="Wilson R."/>
            <person name="Emanuel B.S."/>
            <person name="Shaikh T."/>
            <person name="Kurahashi H."/>
            <person name="Saitta S."/>
            <person name="Budarf M.L."/>
            <person name="McDermid H.E."/>
            <person name="Johnson A."/>
            <person name="Wong A.C.C."/>
            <person name="Morrow B.E."/>
            <person name="Edelmann L."/>
            <person name="Kim U.J."/>
            <person name="Shizuya H."/>
            <person name="Simon M.I."/>
            <person name="Dumanski J.P."/>
            <person name="Peyrard M."/>
            <person name="Kedra D."/>
            <person name="Seroussi E."/>
            <person name="Fransson I."/>
            <person name="Tapia I."/>
            <person name="Bruder C.E."/>
            <person name="O'Brien K.P."/>
            <person name="Wilkinson P."/>
            <person name="Bodenteich A."/>
            <person name="Hartman K."/>
            <person name="Hu X."/>
            <person name="Khan A.S."/>
            <person name="Lane L."/>
            <person name="Tilahun Y."/>
            <person name="Wright H."/>
        </authorList>
    </citation>
    <scope>NUCLEOTIDE SEQUENCE [LARGE SCALE GENOMIC DNA]</scope>
</reference>
<reference key="7">
    <citation type="journal article" date="2004" name="Genome Res.">
        <title>The status, quality, and expansion of the NIH full-length cDNA project: the Mammalian Gene Collection (MGC).</title>
        <authorList>
            <consortium name="The MGC Project Team"/>
        </authorList>
    </citation>
    <scope>NUCLEOTIDE SEQUENCE [LARGE SCALE MRNA] (ISOFORMS 2 AND 5)</scope>
    <source>
        <tissue>Muscle</tissue>
        <tissue>Retinoblastoma</tissue>
    </source>
</reference>
<reference key="8">
    <citation type="journal article" date="1992" name="Genomics">
        <title>Cloning of six new genes with zinc finger motifs mapping to short and long arms of human acrocentric chromosome 22 (p and q11.2).</title>
        <authorList>
            <person name="Aubry M."/>
            <person name="Marineau C."/>
            <person name="Zhang F.R."/>
            <person name="Zahed L."/>
            <person name="Figlewicz D."/>
            <person name="Delattre O."/>
            <person name="Thomas G."/>
            <person name="de Jong P.J."/>
            <person name="Julien J.-P."/>
            <person name="Rouleau G.A."/>
        </authorList>
    </citation>
    <scope>NUCLEOTIDE SEQUENCE [GENOMIC DNA] OF 499-583</scope>
</reference>
<reference key="9">
    <citation type="journal article" date="2017" name="Nat. Struct. Mol. Biol.">
        <title>Site-specific mapping of the human SUMO proteome reveals co-modification with phosphorylation.</title>
        <authorList>
            <person name="Hendriks I.A."/>
            <person name="Lyon D."/>
            <person name="Young C."/>
            <person name="Jensen L.J."/>
            <person name="Vertegaal A.C."/>
            <person name="Nielsen M.L."/>
        </authorList>
    </citation>
    <scope>SUMOYLATION [LARGE SCALE ANALYSIS] AT LYS-582</scope>
    <scope>IDENTIFICATION BY MASS SPECTROMETRY [LARGE SCALE ANALYSIS]</scope>
</reference>
<reference key="10">
    <citation type="journal article" date="2001" name="Schizophr. Res.">
        <title>Association of ZNF74 gene genotypes with age-at-onset of schizophrenia.</title>
        <authorList>
            <person name="Takase K."/>
            <person name="Ohtsuki T."/>
            <person name="Migita O."/>
            <person name="Toru M."/>
            <person name="Inada T."/>
            <person name="Yamakawa-Kobayashi K."/>
            <person name="Arinami T."/>
        </authorList>
    </citation>
    <scope>VARIANTS LYS-117 AND 623-LYS-LEU-624 DELINS ASN-PHE</scope>
</reference>
<accession>Q16587</accession>
<accession>B5MCE3</accession>
<accession>B7Z5Y2</accession>
<accession>Q6IBV2</accession>
<accession>Q6PJP1</accession>
<accession>Q9UC04</accession>
<accession>Q9UF05</accession>
<accession>Q9UF06</accession>
<accession>Q9UF07</accession>
<comment type="function">
    <text>May play a role in RNA metabolism.</text>
</comment>
<comment type="subcellular location">
    <subcellularLocation>
        <location>Nucleus</location>
    </subcellularLocation>
</comment>
<comment type="alternative products">
    <event type="alternative splicing"/>
    <isoform>
        <id>Q16587-1</id>
        <name>2</name>
        <sequence type="displayed"/>
    </isoform>
    <isoform>
        <id>Q16587-2</id>
        <name>1</name>
        <sequence type="described" ref="VSP_006891"/>
    </isoform>
    <isoform>
        <id>Q16587-3</id>
        <name>3</name>
        <sequence type="described" ref="VSP_006892"/>
    </isoform>
    <isoform>
        <id>Q16587-4</id>
        <name>4</name>
        <sequence type="described" ref="VSP_006893"/>
    </isoform>
    <isoform>
        <id>Q16587-5</id>
        <name>5</name>
        <sequence type="described" ref="VSP_045530 VSP_045531"/>
    </isoform>
</comment>
<comment type="tissue specificity">
    <text>Highly expressed in the fetal brain.</text>
</comment>
<comment type="similarity">
    <text evidence="9">Belongs to the krueppel C2H2-type zinc-finger protein family.</text>
</comment>
<comment type="sequence caution" evidence="9">
    <conflict type="frameshift">
        <sequence resource="EMBL-CDS" id="AAF21777"/>
    </conflict>
</comment>
<comment type="sequence caution" evidence="9">
    <conflict type="frameshift">
        <sequence resource="EMBL-CDS" id="AAF21778"/>
    </conflict>
</comment>
<comment type="sequence caution" evidence="9">
    <conflict type="frameshift">
        <sequence resource="EMBL-CDS" id="AAF21779"/>
    </conflict>
</comment>
<comment type="sequence caution" evidence="9">
    <conflict type="frameshift">
        <sequence resource="EMBL-CDS" id="AAF21780"/>
    </conflict>
</comment>
<comment type="sequence caution" evidence="9">
    <conflict type="frameshift">
        <sequence resource="EMBL-CDS" id="CAA50632"/>
    </conflict>
</comment>
<comment type="sequence caution" evidence="9">
    <conflict type="frameshift">
        <sequence resource="EMBL-CDS" id="CAA63379"/>
    </conflict>
</comment>
<organism>
    <name type="scientific">Homo sapiens</name>
    <name type="common">Human</name>
    <dbReference type="NCBI Taxonomy" id="9606"/>
    <lineage>
        <taxon>Eukaryota</taxon>
        <taxon>Metazoa</taxon>
        <taxon>Chordata</taxon>
        <taxon>Craniata</taxon>
        <taxon>Vertebrata</taxon>
        <taxon>Euteleostomi</taxon>
        <taxon>Mammalia</taxon>
        <taxon>Eutheria</taxon>
        <taxon>Euarchontoglires</taxon>
        <taxon>Primates</taxon>
        <taxon>Haplorrhini</taxon>
        <taxon>Catarrhini</taxon>
        <taxon>Hominidae</taxon>
        <taxon>Homo</taxon>
    </lineage>
</organism>
<feature type="chain" id="PRO_0000047383" description="Zinc finger protein 74">
    <location>
        <begin position="1"/>
        <end position="644"/>
    </location>
</feature>
<feature type="domain" description="KRAB" evidence="2">
    <location>
        <begin position="43"/>
        <end position="114"/>
    </location>
</feature>
<feature type="zinc finger region" description="C2H2-type 1" evidence="1">
    <location>
        <begin position="248"/>
        <end position="270"/>
    </location>
</feature>
<feature type="zinc finger region" description="C2H2-type 2" evidence="1">
    <location>
        <begin position="276"/>
        <end position="298"/>
    </location>
</feature>
<feature type="zinc finger region" description="C2H2-type 3" evidence="1">
    <location>
        <begin position="304"/>
        <end position="326"/>
    </location>
</feature>
<feature type="zinc finger region" description="C2H2-type 4" evidence="1">
    <location>
        <begin position="332"/>
        <end position="354"/>
    </location>
</feature>
<feature type="zinc finger region" description="C2H2-type 5" evidence="1">
    <location>
        <begin position="360"/>
        <end position="382"/>
    </location>
</feature>
<feature type="zinc finger region" description="C2H2-type 6" evidence="1">
    <location>
        <begin position="388"/>
        <end position="410"/>
    </location>
</feature>
<feature type="zinc finger region" description="C2H2-type 7" evidence="1">
    <location>
        <begin position="416"/>
        <end position="438"/>
    </location>
</feature>
<feature type="zinc finger region" description="C2H2-type 8" evidence="1">
    <location>
        <begin position="444"/>
        <end position="466"/>
    </location>
</feature>
<feature type="zinc finger region" description="C2H2-type 9" evidence="1">
    <location>
        <begin position="472"/>
        <end position="494"/>
    </location>
</feature>
<feature type="zinc finger region" description="C2H2-type 10" evidence="1">
    <location>
        <begin position="500"/>
        <end position="522"/>
    </location>
</feature>
<feature type="zinc finger region" description="C2H2-type 11" evidence="1">
    <location>
        <begin position="528"/>
        <end position="550"/>
    </location>
</feature>
<feature type="zinc finger region" description="C2H2-type 12" evidence="1">
    <location>
        <begin position="556"/>
        <end position="578"/>
    </location>
</feature>
<feature type="cross-link" description="Glycyl lysine isopeptide (Lys-Gly) (interchain with G-Cter in SUMO2)" evidence="10">
    <location>
        <position position="582"/>
    </location>
</feature>
<feature type="splice variant" id="VSP_006893" description="In isoform 4." evidence="9">
    <original>MEIPAPEPEKTALSSQDPALSLKENLEDISGWGLPEARSKESVSFKDVAVDFTQEEWGQLDSPQRALYRDVMLENYQNLLAL</original>
    <variation>MPSPPFSPRA</variation>
    <location>
        <begin position="1"/>
        <end position="82"/>
    </location>
</feature>
<feature type="splice variant" id="VSP_006891" description="In isoform 1." evidence="5 7 8">
    <location>
        <begin position="1"/>
        <end position="71"/>
    </location>
</feature>
<feature type="splice variant" id="VSP_045530" description="In isoform 5." evidence="6">
    <original>ALSSQDPALSLKENLEDISGWGLPEARSKESVSFKDVAVDFTQEEWGQLDSPQRALYRDVMLENYQNLLALGPPLHKPDVISHLERGEEPWSMQREVPRGPCPEWELKAVPSQQQGICKEEPAQEPIMERPLGGAQAWGRQAGALQRSQAAPWAPAPAMVWDVPVEE</original>
    <variation>GIGEFQGCGCGLHPGGVGSTRLPSEGLVPGCDVGELPEPSCPRTSTAQARCDLSSGTRRGAMEHAEGSPQRALSRMGAEGGALSTAGHLQRRTGPGAHHGAAPRRGAGVGAPGRCSAEESGCALGARTCHGLGRPCRGIPPQVSPLRPATRSRGGTLAGHTQERPGH</variation>
    <location>
        <begin position="12"/>
        <end position="178"/>
    </location>
</feature>
<feature type="splice variant" id="VSP_006892" description="In isoform 3." evidence="9">
    <location>
        <begin position="83"/>
        <end position="114"/>
    </location>
</feature>
<feature type="splice variant" id="VSP_045531" description="In isoform 5." evidence="6">
    <location>
        <begin position="179"/>
        <end position="644"/>
    </location>
</feature>
<feature type="sequence variant" id="VAR_012993" description="In dbSNP:rs3747076." evidence="3 4">
    <original>E</original>
    <variation>K</variation>
    <location>
        <position position="117"/>
    </location>
</feature>
<feature type="sequence variant" id="VAR_012994" evidence="3">
    <original>KL</original>
    <variation>NF</variation>
    <location>
        <begin position="623"/>
        <end position="624"/>
    </location>
</feature>
<feature type="sequence conflict" description="In Ref. 7; AAH13395." evidence="9" ref="7">
    <original>V</original>
    <variation>A</variation>
    <location>
        <position position="171"/>
    </location>
</feature>
<feature type="sequence conflict" description="In Ref. 1; CAA63379, 2; CAA50632 and 4; AAF21777/AAF21778/AAF21779/AAF21780." evidence="9" ref="1 2 4">
    <original>V</original>
    <variation>M</variation>
    <location>
        <position position="517"/>
    </location>
</feature>
<feature type="sequence conflict" description="In Ref. 5; BAH13068." evidence="9" ref="5">
    <original>S</original>
    <variation>P</variation>
    <location>
        <position position="569"/>
    </location>
</feature>
<evidence type="ECO:0000255" key="1">
    <source>
        <dbReference type="PROSITE-ProRule" id="PRU00042"/>
    </source>
</evidence>
<evidence type="ECO:0000255" key="2">
    <source>
        <dbReference type="PROSITE-ProRule" id="PRU00119"/>
    </source>
</evidence>
<evidence type="ECO:0000269" key="3">
    <source>
    </source>
</evidence>
<evidence type="ECO:0000269" key="4">
    <source>
    </source>
</evidence>
<evidence type="ECO:0000303" key="5">
    <source>
    </source>
</evidence>
<evidence type="ECO:0000303" key="6">
    <source>
    </source>
</evidence>
<evidence type="ECO:0000303" key="7">
    <source>
    </source>
</evidence>
<evidence type="ECO:0000303" key="8">
    <source>
    </source>
</evidence>
<evidence type="ECO:0000305" key="9"/>
<evidence type="ECO:0007744" key="10">
    <source>
    </source>
</evidence>
<protein>
    <recommendedName>
        <fullName>Zinc finger protein 74</fullName>
    </recommendedName>
    <alternativeName>
        <fullName>Zinc finger protein 520</fullName>
    </alternativeName>
    <alternativeName>
        <fullName>hZNF7</fullName>
    </alternativeName>
</protein>
<name>ZNF74_HUMAN</name>
<dbReference type="EMBL" id="X92715">
    <property type="protein sequence ID" value="CAA63379.1"/>
    <property type="status" value="ALT_FRAME"/>
    <property type="molecule type" value="mRNA"/>
</dbReference>
<dbReference type="EMBL" id="X71623">
    <property type="protein sequence ID" value="CAA50632.1"/>
    <property type="status" value="ALT_FRAME"/>
    <property type="molecule type" value="mRNA"/>
</dbReference>
<dbReference type="EMBL" id="CR456616">
    <property type="protein sequence ID" value="CAG30502.1"/>
    <property type="molecule type" value="mRNA"/>
</dbReference>
<dbReference type="EMBL" id="AF072567">
    <property type="protein sequence ID" value="AAF21777.1"/>
    <property type="status" value="ALT_FRAME"/>
    <property type="molecule type" value="Genomic_DNA"/>
</dbReference>
<dbReference type="EMBL" id="AF072557">
    <property type="protein sequence ID" value="AAF21777.1"/>
    <property type="status" value="JOINED"/>
    <property type="molecule type" value="Genomic_DNA"/>
</dbReference>
<dbReference type="EMBL" id="AF072562">
    <property type="protein sequence ID" value="AAF21777.1"/>
    <property type="status" value="JOINED"/>
    <property type="molecule type" value="Genomic_DNA"/>
</dbReference>
<dbReference type="EMBL" id="AF072567">
    <property type="protein sequence ID" value="AAF21778.1"/>
    <property type="status" value="ALT_FRAME"/>
    <property type="molecule type" value="Genomic_DNA"/>
</dbReference>
<dbReference type="EMBL" id="AF072557">
    <property type="protein sequence ID" value="AAF21778.1"/>
    <property type="status" value="JOINED"/>
    <property type="molecule type" value="Genomic_DNA"/>
</dbReference>
<dbReference type="EMBL" id="AF072562">
    <property type="protein sequence ID" value="AAF21778.1"/>
    <property type="status" value="JOINED"/>
    <property type="molecule type" value="Genomic_DNA"/>
</dbReference>
<dbReference type="EMBL" id="AF072567">
    <property type="protein sequence ID" value="AAF21779.1"/>
    <property type="status" value="ALT_FRAME"/>
    <property type="molecule type" value="Genomic_DNA"/>
</dbReference>
<dbReference type="EMBL" id="AF072562">
    <property type="protein sequence ID" value="AAF21779.1"/>
    <property type="status" value="JOINED"/>
    <property type="molecule type" value="Genomic_DNA"/>
</dbReference>
<dbReference type="EMBL" id="AF072567">
    <property type="protein sequence ID" value="AAF21780.1"/>
    <property type="status" value="ALT_FRAME"/>
    <property type="molecule type" value="Genomic_DNA"/>
</dbReference>
<dbReference type="EMBL" id="AF072562">
    <property type="protein sequence ID" value="AAF21780.1"/>
    <property type="status" value="JOINED"/>
    <property type="molecule type" value="Genomic_DNA"/>
</dbReference>
<dbReference type="EMBL" id="AK299569">
    <property type="protein sequence ID" value="BAH13068.1"/>
    <property type="molecule type" value="mRNA"/>
</dbReference>
<dbReference type="EMBL" id="AC007731">
    <property type="status" value="NOT_ANNOTATED_CDS"/>
    <property type="molecule type" value="Genomic_DNA"/>
</dbReference>
<dbReference type="EMBL" id="BC013395">
    <property type="protein sequence ID" value="AAH13395.1"/>
    <property type="molecule type" value="mRNA"/>
</dbReference>
<dbReference type="EMBL" id="BC056902">
    <property type="status" value="NOT_ANNOTATED_CDS"/>
    <property type="molecule type" value="mRNA"/>
</dbReference>
<dbReference type="EMBL" id="X63182">
    <property type="protein sequence ID" value="CAC16149.1"/>
    <property type="molecule type" value="Genomic_DNA"/>
</dbReference>
<dbReference type="CCDS" id="CCDS42982.1">
    <molecule id="Q16587-1"/>
</dbReference>
<dbReference type="CCDS" id="CCDS58794.1">
    <molecule id="Q16587-5"/>
</dbReference>
<dbReference type="PIR" id="I39311">
    <property type="entry name" value="I39311"/>
</dbReference>
<dbReference type="RefSeq" id="NP_001243452.1">
    <molecule id="Q16587-5"/>
    <property type="nucleotide sequence ID" value="NM_001256523.2"/>
</dbReference>
<dbReference type="RefSeq" id="NP_001243453.1">
    <molecule id="Q16587-1"/>
    <property type="nucleotide sequence ID" value="NM_001256524.2"/>
</dbReference>
<dbReference type="RefSeq" id="NP_001243454.1">
    <molecule id="Q16587-2"/>
    <property type="nucleotide sequence ID" value="NM_001256525.2"/>
</dbReference>
<dbReference type="RefSeq" id="NP_003417.2">
    <molecule id="Q16587-1"/>
    <property type="nucleotide sequence ID" value="NM_003426.4"/>
</dbReference>
<dbReference type="SMR" id="Q16587"/>
<dbReference type="BioGRID" id="113444">
    <property type="interactions" value="36"/>
</dbReference>
<dbReference type="FunCoup" id="Q16587">
    <property type="interactions" value="298"/>
</dbReference>
<dbReference type="IntAct" id="Q16587">
    <property type="interactions" value="48"/>
</dbReference>
<dbReference type="MINT" id="Q16587"/>
<dbReference type="STRING" id="9606.ENSP00000383301"/>
<dbReference type="iPTMnet" id="Q16587"/>
<dbReference type="PhosphoSitePlus" id="Q16587"/>
<dbReference type="BioMuta" id="ZNF74"/>
<dbReference type="DMDM" id="292495055"/>
<dbReference type="jPOST" id="Q16587"/>
<dbReference type="MassIVE" id="Q16587"/>
<dbReference type="PaxDb" id="9606-ENSP00000483077"/>
<dbReference type="PeptideAtlas" id="Q16587"/>
<dbReference type="ProteomicsDB" id="6037"/>
<dbReference type="ProteomicsDB" id="60933">
    <molecule id="Q16587-1"/>
</dbReference>
<dbReference type="ProteomicsDB" id="60934">
    <molecule id="Q16587-2"/>
</dbReference>
<dbReference type="ProteomicsDB" id="60935">
    <molecule id="Q16587-3"/>
</dbReference>
<dbReference type="ProteomicsDB" id="60936">
    <molecule id="Q16587-4"/>
</dbReference>
<dbReference type="Antibodypedia" id="316">
    <property type="antibodies" value="76 antibodies from 17 providers"/>
</dbReference>
<dbReference type="DNASU" id="7625"/>
<dbReference type="Ensembl" id="ENST00000400451.7">
    <molecule id="Q16587-1"/>
    <property type="protein sequence ID" value="ENSP00000383301.2"/>
    <property type="gene ID" value="ENSG00000185252.19"/>
</dbReference>
<dbReference type="Ensembl" id="ENST00000403682.7">
    <molecule id="Q16587-5"/>
    <property type="protein sequence ID" value="ENSP00000384750.3"/>
    <property type="gene ID" value="ENSG00000185252.19"/>
</dbReference>
<dbReference type="Ensembl" id="ENST00000405993.2">
    <molecule id="Q16587-3"/>
    <property type="protein sequence ID" value="ENSP00000385855.1"/>
    <property type="gene ID" value="ENSG00000185252.19"/>
</dbReference>
<dbReference type="Ensembl" id="ENST00000611540.4">
    <molecule id="Q16587-1"/>
    <property type="protein sequence ID" value="ENSP00000483077.1"/>
    <property type="gene ID" value="ENSG00000185252.19"/>
</dbReference>
<dbReference type="GeneID" id="7625"/>
<dbReference type="KEGG" id="hsa:7625"/>
<dbReference type="MANE-Select" id="ENST00000400451.7">
    <property type="protein sequence ID" value="ENSP00000383301.2"/>
    <property type="RefSeq nucleotide sequence ID" value="NM_003426.4"/>
    <property type="RefSeq protein sequence ID" value="NP_003417.2"/>
</dbReference>
<dbReference type="UCSC" id="uc002zsh.5">
    <molecule id="Q16587-1"/>
    <property type="organism name" value="human"/>
</dbReference>
<dbReference type="AGR" id="HGNC:13144"/>
<dbReference type="CTD" id="7625"/>
<dbReference type="DisGeNET" id="7625"/>
<dbReference type="GeneCards" id="ZNF74"/>
<dbReference type="HGNC" id="HGNC:13144">
    <property type="gene designation" value="ZNF74"/>
</dbReference>
<dbReference type="HPA" id="ENSG00000185252">
    <property type="expression patterns" value="Low tissue specificity"/>
</dbReference>
<dbReference type="MIM" id="194548">
    <property type="type" value="gene"/>
</dbReference>
<dbReference type="neXtProt" id="NX_Q16587"/>
<dbReference type="OpenTargets" id="ENSG00000185252"/>
<dbReference type="PharmGKB" id="PA37718"/>
<dbReference type="VEuPathDB" id="HostDB:ENSG00000185252"/>
<dbReference type="eggNOG" id="KOG1721">
    <property type="taxonomic scope" value="Eukaryota"/>
</dbReference>
<dbReference type="GeneTree" id="ENSGT00940000162000"/>
<dbReference type="HOGENOM" id="CLU_002678_44_5_1"/>
<dbReference type="InParanoid" id="Q16587"/>
<dbReference type="OMA" id="RPEWQLK"/>
<dbReference type="OrthoDB" id="40579at2759"/>
<dbReference type="PAN-GO" id="Q16587">
    <property type="GO annotations" value="4 GO annotations based on evolutionary models"/>
</dbReference>
<dbReference type="PhylomeDB" id="Q16587"/>
<dbReference type="TreeFam" id="TF341817"/>
<dbReference type="PathwayCommons" id="Q16587"/>
<dbReference type="Reactome" id="R-HSA-212436">
    <property type="pathway name" value="Generic Transcription Pathway"/>
</dbReference>
<dbReference type="SignaLink" id="Q16587"/>
<dbReference type="BioGRID-ORCS" id="7625">
    <property type="hits" value="29 hits in 1174 CRISPR screens"/>
</dbReference>
<dbReference type="GeneWiki" id="ZNF74"/>
<dbReference type="GenomeRNAi" id="7625"/>
<dbReference type="Pharos" id="Q16587">
    <property type="development level" value="Tbio"/>
</dbReference>
<dbReference type="PRO" id="PR:Q16587"/>
<dbReference type="Proteomes" id="UP000005640">
    <property type="component" value="Chromosome 22"/>
</dbReference>
<dbReference type="RNAct" id="Q16587">
    <property type="molecule type" value="protein"/>
</dbReference>
<dbReference type="Bgee" id="ENSG00000185252">
    <property type="expression patterns" value="Expressed in cortical plate and 129 other cell types or tissues"/>
</dbReference>
<dbReference type="ExpressionAtlas" id="Q16587">
    <property type="expression patterns" value="baseline and differential"/>
</dbReference>
<dbReference type="GO" id="GO:0015629">
    <property type="term" value="C:actin cytoskeleton"/>
    <property type="evidence" value="ECO:0000314"/>
    <property type="project" value="HPA"/>
</dbReference>
<dbReference type="GO" id="GO:0005654">
    <property type="term" value="C:nucleoplasm"/>
    <property type="evidence" value="ECO:0000314"/>
    <property type="project" value="HPA"/>
</dbReference>
<dbReference type="GO" id="GO:0005634">
    <property type="term" value="C:nucleus"/>
    <property type="evidence" value="ECO:0000318"/>
    <property type="project" value="GO_Central"/>
</dbReference>
<dbReference type="GO" id="GO:0000981">
    <property type="term" value="F:DNA-binding transcription factor activity, RNA polymerase II-specific"/>
    <property type="evidence" value="ECO:0000318"/>
    <property type="project" value="GO_Central"/>
</dbReference>
<dbReference type="GO" id="GO:0003723">
    <property type="term" value="F:RNA binding"/>
    <property type="evidence" value="ECO:0007669"/>
    <property type="project" value="UniProtKB-KW"/>
</dbReference>
<dbReference type="GO" id="GO:0000978">
    <property type="term" value="F:RNA polymerase II cis-regulatory region sequence-specific DNA binding"/>
    <property type="evidence" value="ECO:0000318"/>
    <property type="project" value="GO_Central"/>
</dbReference>
<dbReference type="GO" id="GO:0008270">
    <property type="term" value="F:zinc ion binding"/>
    <property type="evidence" value="ECO:0007669"/>
    <property type="project" value="UniProtKB-KW"/>
</dbReference>
<dbReference type="GO" id="GO:0006355">
    <property type="term" value="P:regulation of DNA-templated transcription"/>
    <property type="evidence" value="ECO:0000304"/>
    <property type="project" value="ProtInc"/>
</dbReference>
<dbReference type="GO" id="GO:0006357">
    <property type="term" value="P:regulation of transcription by RNA polymerase II"/>
    <property type="evidence" value="ECO:0000318"/>
    <property type="project" value="GO_Central"/>
</dbReference>
<dbReference type="CDD" id="cd07765">
    <property type="entry name" value="KRAB_A-box"/>
    <property type="match status" value="1"/>
</dbReference>
<dbReference type="FunFam" id="3.30.160.60:FF:000822">
    <property type="entry name" value="Zinc finger protein 234, isoform CRA_a"/>
    <property type="match status" value="1"/>
</dbReference>
<dbReference type="FunFam" id="3.30.160.60:FF:000622">
    <property type="entry name" value="zinc finger protein 26 isoform X3"/>
    <property type="match status" value="1"/>
</dbReference>
<dbReference type="FunFam" id="3.30.160.60:FF:001530">
    <property type="entry name" value="Zinc finger protein 268"/>
    <property type="match status" value="1"/>
</dbReference>
<dbReference type="FunFam" id="3.30.160.60:FF:002343">
    <property type="entry name" value="Zinc finger protein 33A"/>
    <property type="match status" value="1"/>
</dbReference>
<dbReference type="FunFam" id="3.30.160.60:FF:000690">
    <property type="entry name" value="Zinc finger protein 354C"/>
    <property type="match status" value="1"/>
</dbReference>
<dbReference type="FunFam" id="3.30.160.60:FF:000016">
    <property type="entry name" value="zinc finger protein 37 homolog"/>
    <property type="match status" value="1"/>
</dbReference>
<dbReference type="FunFam" id="3.30.160.60:FF:001270">
    <property type="entry name" value="zinc finger protein 583 isoform X1"/>
    <property type="match status" value="1"/>
</dbReference>
<dbReference type="FunFam" id="3.30.160.60:FF:002207">
    <property type="entry name" value="Zinc finger protein 74"/>
    <property type="match status" value="1"/>
</dbReference>
<dbReference type="FunFam" id="3.30.160.60:FF:000710">
    <property type="entry name" value="Zinc finger protein 768"/>
    <property type="match status" value="1"/>
</dbReference>
<dbReference type="FunFam" id="3.30.160.60:FF:000416">
    <property type="entry name" value="zinc finger protein 879 isoform X1"/>
    <property type="match status" value="1"/>
</dbReference>
<dbReference type="FunFam" id="3.30.160.60:FF:000229">
    <property type="entry name" value="Zinc finger protein 90 homolog"/>
    <property type="match status" value="1"/>
</dbReference>
<dbReference type="FunFam" id="3.30.160.60:FF:000330">
    <property type="entry name" value="Zinc finger with KRAB and SCAN domains 1"/>
    <property type="match status" value="1"/>
</dbReference>
<dbReference type="Gene3D" id="6.10.140.140">
    <property type="match status" value="1"/>
</dbReference>
<dbReference type="Gene3D" id="3.30.160.60">
    <property type="entry name" value="Classic Zinc Finger"/>
    <property type="match status" value="12"/>
</dbReference>
<dbReference type="InterPro" id="IPR001909">
    <property type="entry name" value="KRAB"/>
</dbReference>
<dbReference type="InterPro" id="IPR036051">
    <property type="entry name" value="KRAB_dom_sf"/>
</dbReference>
<dbReference type="InterPro" id="IPR036236">
    <property type="entry name" value="Znf_C2H2_sf"/>
</dbReference>
<dbReference type="InterPro" id="IPR013087">
    <property type="entry name" value="Znf_C2H2_type"/>
</dbReference>
<dbReference type="PANTHER" id="PTHR14003">
    <property type="entry name" value="TRANSCRIPTIONAL REPRESSOR PROTEIN YY"/>
    <property type="match status" value="1"/>
</dbReference>
<dbReference type="PANTHER" id="PTHR14003:SF23">
    <property type="entry name" value="ZINC FINGER PROTEIN 143"/>
    <property type="match status" value="1"/>
</dbReference>
<dbReference type="Pfam" id="PF01352">
    <property type="entry name" value="KRAB"/>
    <property type="match status" value="1"/>
</dbReference>
<dbReference type="Pfam" id="PF00096">
    <property type="entry name" value="zf-C2H2"/>
    <property type="match status" value="8"/>
</dbReference>
<dbReference type="SMART" id="SM00349">
    <property type="entry name" value="KRAB"/>
    <property type="match status" value="1"/>
</dbReference>
<dbReference type="SMART" id="SM00355">
    <property type="entry name" value="ZnF_C2H2"/>
    <property type="match status" value="12"/>
</dbReference>
<dbReference type="SUPFAM" id="SSF57667">
    <property type="entry name" value="beta-beta-alpha zinc fingers"/>
    <property type="match status" value="6"/>
</dbReference>
<dbReference type="SUPFAM" id="SSF109640">
    <property type="entry name" value="KRAB domain (Kruppel-associated box)"/>
    <property type="match status" value="1"/>
</dbReference>
<dbReference type="PROSITE" id="PS50805">
    <property type="entry name" value="KRAB"/>
    <property type="match status" value="1"/>
</dbReference>
<dbReference type="PROSITE" id="PS00028">
    <property type="entry name" value="ZINC_FINGER_C2H2_1"/>
    <property type="match status" value="12"/>
</dbReference>
<dbReference type="PROSITE" id="PS50157">
    <property type="entry name" value="ZINC_FINGER_C2H2_2"/>
    <property type="match status" value="12"/>
</dbReference>
<gene>
    <name type="primary">ZNF74</name>
    <name type="synonym">ZNF520</name>
</gene>
<sequence length="644" mass="72207">MEIPAPEPEKTALSSQDPALSLKENLEDISGWGLPEARSKESVSFKDVAVDFTQEEWGQLDSPQRALYRDVMLENYQNLLALGPPLHKPDVISHLERGEEPWSMQREVPRGPCPEWELKAVPSQQQGICKEEPAQEPIMERPLGGAQAWGRQAGALQRSQAAPWAPAPAMVWDVPVEEFPLRCPLFAQQRVPEGGPLLDTRKNVQATEGRTKAPARLCAGENASTPSEPEKFPQVRRQRGAGAGEGEFVCGECGKAFRQSSSLTLHRRWHSREKAYKCDECGKAFTWSTNLLEHRRIHTGEKPFFCGECGKAFSCHSSLNVHQRIHTGERPYKCSACEKAFSCSSLLSMHLRVHTGEKPYRCGECGKAFNQRTHLTRHHRIHTGEKPYQCGSCGKAFTCHSSLTVHEKIHSGDKPFKCSDCEKAFNSRSRLTLHQRTHTGEKPFKCADCGKGFSCHAYLLVHRRIHSGEKPFKCNECGKAFSSHAYLIVHRRIHTGEKPFDCSQCWKAFSCHSSLIVHQRIHTGEKPYKCSECGRAFSQNHCLIKHQKIHSGEKSFKCEKCGEMFNWSSHLTEHQRLHSEGKPLAIQFNKHLLSTYYVPGSLLGAGDAGLRDVDPIDALDVAKLLCVVPPRAGRNFSLGSKPRN</sequence>
<proteinExistence type="evidence at protein level"/>